<accession>A4Y8Y5</accession>
<name>TRMB_SHEPC</name>
<evidence type="ECO:0000250" key="1"/>
<evidence type="ECO:0000255" key="2">
    <source>
        <dbReference type="HAMAP-Rule" id="MF_01057"/>
    </source>
</evidence>
<keyword id="KW-0489">Methyltransferase</keyword>
<keyword id="KW-0949">S-adenosyl-L-methionine</keyword>
<keyword id="KW-0808">Transferase</keyword>
<keyword id="KW-0819">tRNA processing</keyword>
<reference key="1">
    <citation type="submission" date="2007-04" db="EMBL/GenBank/DDBJ databases">
        <title>Complete sequence of Shewanella putrefaciens CN-32.</title>
        <authorList>
            <consortium name="US DOE Joint Genome Institute"/>
            <person name="Copeland A."/>
            <person name="Lucas S."/>
            <person name="Lapidus A."/>
            <person name="Barry K."/>
            <person name="Detter J.C."/>
            <person name="Glavina del Rio T."/>
            <person name="Hammon N."/>
            <person name="Israni S."/>
            <person name="Dalin E."/>
            <person name="Tice H."/>
            <person name="Pitluck S."/>
            <person name="Chain P."/>
            <person name="Malfatti S."/>
            <person name="Shin M."/>
            <person name="Vergez L."/>
            <person name="Schmutz J."/>
            <person name="Larimer F."/>
            <person name="Land M."/>
            <person name="Hauser L."/>
            <person name="Kyrpides N."/>
            <person name="Mikhailova N."/>
            <person name="Romine M.F."/>
            <person name="Fredrickson J."/>
            <person name="Tiedje J."/>
            <person name="Richardson P."/>
        </authorList>
    </citation>
    <scope>NUCLEOTIDE SEQUENCE [LARGE SCALE GENOMIC DNA]</scope>
    <source>
        <strain>CN-32 / ATCC BAA-453</strain>
    </source>
</reference>
<feature type="chain" id="PRO_1000064410" description="tRNA (guanine-N(7)-)-methyltransferase">
    <location>
        <begin position="1"/>
        <end position="238"/>
    </location>
</feature>
<feature type="active site" evidence="1">
    <location>
        <position position="143"/>
    </location>
</feature>
<feature type="binding site" evidence="2">
    <location>
        <position position="68"/>
    </location>
    <ligand>
        <name>S-adenosyl-L-methionine</name>
        <dbReference type="ChEBI" id="CHEBI:59789"/>
    </ligand>
</feature>
<feature type="binding site" evidence="2">
    <location>
        <position position="93"/>
    </location>
    <ligand>
        <name>S-adenosyl-L-methionine</name>
        <dbReference type="ChEBI" id="CHEBI:59789"/>
    </ligand>
</feature>
<feature type="binding site" evidence="2">
    <location>
        <position position="120"/>
    </location>
    <ligand>
        <name>S-adenosyl-L-methionine</name>
        <dbReference type="ChEBI" id="CHEBI:59789"/>
    </ligand>
</feature>
<feature type="binding site" evidence="2">
    <location>
        <position position="143"/>
    </location>
    <ligand>
        <name>S-adenosyl-L-methionine</name>
        <dbReference type="ChEBI" id="CHEBI:59789"/>
    </ligand>
</feature>
<feature type="binding site" evidence="2">
    <location>
        <position position="147"/>
    </location>
    <ligand>
        <name>substrate</name>
    </ligand>
</feature>
<feature type="binding site" evidence="2">
    <location>
        <position position="179"/>
    </location>
    <ligand>
        <name>substrate</name>
    </ligand>
</feature>
<feature type="binding site" evidence="2">
    <location>
        <begin position="216"/>
        <end position="219"/>
    </location>
    <ligand>
        <name>substrate</name>
    </ligand>
</feature>
<proteinExistence type="inferred from homology"/>
<protein>
    <recommendedName>
        <fullName evidence="2">tRNA (guanine-N(7)-)-methyltransferase</fullName>
        <ecNumber evidence="2">2.1.1.33</ecNumber>
    </recommendedName>
    <alternativeName>
        <fullName evidence="2">tRNA (guanine(46)-N(7))-methyltransferase</fullName>
    </alternativeName>
    <alternativeName>
        <fullName evidence="2">tRNA(m7G46)-methyltransferase</fullName>
    </alternativeName>
</protein>
<sequence length="238" mass="26814">MSEVTTAEFNEEGKYLRKIRSFVLREGRLTKGQAQAIESQWPTMGLDYSPVPLNLSEVFGREADTVLEIGFGMGASLVQMAKDAPEQNFIGIEVHKPGVGSCLSDAAIAGVTNLRVYHHDAMEVLEHAIADGSLARVQLFFPDPWHKKRHHKRRIVQAEFAELVRRKLKIGGVFHMATDWEEYSEHMLEVMNAAPGYKNQSADGTVVPRPDHRPLTKFEARGHRLGHGVWDLMFERIA</sequence>
<gene>
    <name evidence="2" type="primary">trmB</name>
    <name type="ordered locus">Sputcn32_2699</name>
</gene>
<dbReference type="EC" id="2.1.1.33" evidence="2"/>
<dbReference type="EMBL" id="CP000681">
    <property type="protein sequence ID" value="ABP76418.1"/>
    <property type="molecule type" value="Genomic_DNA"/>
</dbReference>
<dbReference type="SMR" id="A4Y8Y5"/>
<dbReference type="STRING" id="319224.Sputcn32_2699"/>
<dbReference type="KEGG" id="spc:Sputcn32_2699"/>
<dbReference type="eggNOG" id="COG0220">
    <property type="taxonomic scope" value="Bacteria"/>
</dbReference>
<dbReference type="HOGENOM" id="CLU_050910_0_1_6"/>
<dbReference type="UniPathway" id="UPA00989"/>
<dbReference type="GO" id="GO:0043527">
    <property type="term" value="C:tRNA methyltransferase complex"/>
    <property type="evidence" value="ECO:0007669"/>
    <property type="project" value="TreeGrafter"/>
</dbReference>
<dbReference type="GO" id="GO:0008176">
    <property type="term" value="F:tRNA (guanine(46)-N7)-methyltransferase activity"/>
    <property type="evidence" value="ECO:0007669"/>
    <property type="project" value="UniProtKB-UniRule"/>
</dbReference>
<dbReference type="CDD" id="cd02440">
    <property type="entry name" value="AdoMet_MTases"/>
    <property type="match status" value="1"/>
</dbReference>
<dbReference type="FunFam" id="3.40.50.150:FF:000024">
    <property type="entry name" value="tRNA (guanine-N(7)-)-methyltransferase"/>
    <property type="match status" value="1"/>
</dbReference>
<dbReference type="Gene3D" id="3.40.50.150">
    <property type="entry name" value="Vaccinia Virus protein VP39"/>
    <property type="match status" value="1"/>
</dbReference>
<dbReference type="HAMAP" id="MF_01057">
    <property type="entry name" value="tRNA_methyltr_TrmB"/>
    <property type="match status" value="1"/>
</dbReference>
<dbReference type="InterPro" id="IPR029063">
    <property type="entry name" value="SAM-dependent_MTases_sf"/>
</dbReference>
<dbReference type="InterPro" id="IPR003358">
    <property type="entry name" value="tRNA_(Gua-N-7)_MeTrfase_Trmb"/>
</dbReference>
<dbReference type="InterPro" id="IPR055361">
    <property type="entry name" value="tRNA_methyltr_TrmB_bact"/>
</dbReference>
<dbReference type="NCBIfam" id="TIGR00091">
    <property type="entry name" value="tRNA (guanosine(46)-N7)-methyltransferase TrmB"/>
    <property type="match status" value="1"/>
</dbReference>
<dbReference type="PANTHER" id="PTHR23417">
    <property type="entry name" value="3-DEOXY-D-MANNO-OCTULOSONIC-ACID TRANSFERASE/TRNA GUANINE-N 7 - -METHYLTRANSFERASE"/>
    <property type="match status" value="1"/>
</dbReference>
<dbReference type="PANTHER" id="PTHR23417:SF14">
    <property type="entry name" value="PENTACOTRIPEPTIDE-REPEAT REGION OF PRORP DOMAIN-CONTAINING PROTEIN"/>
    <property type="match status" value="1"/>
</dbReference>
<dbReference type="Pfam" id="PF02390">
    <property type="entry name" value="Methyltransf_4"/>
    <property type="match status" value="1"/>
</dbReference>
<dbReference type="SUPFAM" id="SSF53335">
    <property type="entry name" value="S-adenosyl-L-methionine-dependent methyltransferases"/>
    <property type="match status" value="1"/>
</dbReference>
<dbReference type="PROSITE" id="PS51625">
    <property type="entry name" value="SAM_MT_TRMB"/>
    <property type="match status" value="1"/>
</dbReference>
<organism>
    <name type="scientific">Shewanella putrefaciens (strain CN-32 / ATCC BAA-453)</name>
    <dbReference type="NCBI Taxonomy" id="319224"/>
    <lineage>
        <taxon>Bacteria</taxon>
        <taxon>Pseudomonadati</taxon>
        <taxon>Pseudomonadota</taxon>
        <taxon>Gammaproteobacteria</taxon>
        <taxon>Alteromonadales</taxon>
        <taxon>Shewanellaceae</taxon>
        <taxon>Shewanella</taxon>
    </lineage>
</organism>
<comment type="function">
    <text evidence="2">Catalyzes the formation of N(7)-methylguanine at position 46 (m7G46) in tRNA.</text>
</comment>
<comment type="catalytic activity">
    <reaction evidence="2">
        <text>guanosine(46) in tRNA + S-adenosyl-L-methionine = N(7)-methylguanosine(46) in tRNA + S-adenosyl-L-homocysteine</text>
        <dbReference type="Rhea" id="RHEA:42708"/>
        <dbReference type="Rhea" id="RHEA-COMP:10188"/>
        <dbReference type="Rhea" id="RHEA-COMP:10189"/>
        <dbReference type="ChEBI" id="CHEBI:57856"/>
        <dbReference type="ChEBI" id="CHEBI:59789"/>
        <dbReference type="ChEBI" id="CHEBI:74269"/>
        <dbReference type="ChEBI" id="CHEBI:74480"/>
        <dbReference type="EC" id="2.1.1.33"/>
    </reaction>
</comment>
<comment type="pathway">
    <text evidence="2">tRNA modification; N(7)-methylguanine-tRNA biosynthesis.</text>
</comment>
<comment type="similarity">
    <text evidence="2">Belongs to the class I-like SAM-binding methyltransferase superfamily. TrmB family.</text>
</comment>